<proteinExistence type="inferred from homology"/>
<evidence type="ECO:0000250" key="1"/>
<evidence type="ECO:0000255" key="2">
    <source>
        <dbReference type="HAMAP-Rule" id="MF_00403"/>
    </source>
</evidence>
<evidence type="ECO:0000305" key="3"/>
<name>RS12_SYNFM</name>
<reference key="1">
    <citation type="submission" date="2006-10" db="EMBL/GenBank/DDBJ databases">
        <title>Complete sequence of Syntrophobacter fumaroxidans MPOB.</title>
        <authorList>
            <consortium name="US DOE Joint Genome Institute"/>
            <person name="Copeland A."/>
            <person name="Lucas S."/>
            <person name="Lapidus A."/>
            <person name="Barry K."/>
            <person name="Detter J.C."/>
            <person name="Glavina del Rio T."/>
            <person name="Hammon N."/>
            <person name="Israni S."/>
            <person name="Pitluck S."/>
            <person name="Goltsman E.G."/>
            <person name="Martinez M."/>
            <person name="Schmutz J."/>
            <person name="Larimer F."/>
            <person name="Land M."/>
            <person name="Hauser L."/>
            <person name="Kyrpides N."/>
            <person name="Kim E."/>
            <person name="Boone D.R."/>
            <person name="Brockman F."/>
            <person name="Culley D."/>
            <person name="Ferry J."/>
            <person name="Gunsalus R."/>
            <person name="McInerney M.J."/>
            <person name="Morrison M."/>
            <person name="Plugge C."/>
            <person name="Rohlin L."/>
            <person name="Scholten J."/>
            <person name="Sieber J."/>
            <person name="Stams A.J.M."/>
            <person name="Worm P."/>
            <person name="Henstra A.M."/>
            <person name="Richardson P."/>
        </authorList>
    </citation>
    <scope>NUCLEOTIDE SEQUENCE [LARGE SCALE GENOMIC DNA]</scope>
    <source>
        <strain>DSM 10017 / MPOB</strain>
    </source>
</reference>
<dbReference type="EMBL" id="CP000478">
    <property type="protein sequence ID" value="ABK17238.1"/>
    <property type="molecule type" value="Genomic_DNA"/>
</dbReference>
<dbReference type="RefSeq" id="WP_011698409.1">
    <property type="nucleotide sequence ID" value="NC_008554.1"/>
</dbReference>
<dbReference type="SMR" id="A0LII6"/>
<dbReference type="FunCoup" id="A0LII6">
    <property type="interactions" value="543"/>
</dbReference>
<dbReference type="STRING" id="335543.Sfum_1551"/>
<dbReference type="KEGG" id="sfu:Sfum_1551"/>
<dbReference type="eggNOG" id="COG0048">
    <property type="taxonomic scope" value="Bacteria"/>
</dbReference>
<dbReference type="HOGENOM" id="CLU_104295_1_2_7"/>
<dbReference type="InParanoid" id="A0LII6"/>
<dbReference type="OrthoDB" id="9802366at2"/>
<dbReference type="Proteomes" id="UP000001784">
    <property type="component" value="Chromosome"/>
</dbReference>
<dbReference type="GO" id="GO:0015935">
    <property type="term" value="C:small ribosomal subunit"/>
    <property type="evidence" value="ECO:0007669"/>
    <property type="project" value="InterPro"/>
</dbReference>
<dbReference type="GO" id="GO:0019843">
    <property type="term" value="F:rRNA binding"/>
    <property type="evidence" value="ECO:0007669"/>
    <property type="project" value="UniProtKB-UniRule"/>
</dbReference>
<dbReference type="GO" id="GO:0003735">
    <property type="term" value="F:structural constituent of ribosome"/>
    <property type="evidence" value="ECO:0007669"/>
    <property type="project" value="InterPro"/>
</dbReference>
<dbReference type="GO" id="GO:0000049">
    <property type="term" value="F:tRNA binding"/>
    <property type="evidence" value="ECO:0007669"/>
    <property type="project" value="UniProtKB-UniRule"/>
</dbReference>
<dbReference type="GO" id="GO:0006412">
    <property type="term" value="P:translation"/>
    <property type="evidence" value="ECO:0007669"/>
    <property type="project" value="UniProtKB-UniRule"/>
</dbReference>
<dbReference type="CDD" id="cd03368">
    <property type="entry name" value="Ribosomal_S12"/>
    <property type="match status" value="1"/>
</dbReference>
<dbReference type="FunFam" id="2.40.50.140:FF:000001">
    <property type="entry name" value="30S ribosomal protein S12"/>
    <property type="match status" value="1"/>
</dbReference>
<dbReference type="Gene3D" id="2.40.50.140">
    <property type="entry name" value="Nucleic acid-binding proteins"/>
    <property type="match status" value="1"/>
</dbReference>
<dbReference type="HAMAP" id="MF_00403_B">
    <property type="entry name" value="Ribosomal_uS12_B"/>
    <property type="match status" value="1"/>
</dbReference>
<dbReference type="InterPro" id="IPR012340">
    <property type="entry name" value="NA-bd_OB-fold"/>
</dbReference>
<dbReference type="InterPro" id="IPR006032">
    <property type="entry name" value="Ribosomal_uS12"/>
</dbReference>
<dbReference type="InterPro" id="IPR005679">
    <property type="entry name" value="Ribosomal_uS12_bac"/>
</dbReference>
<dbReference type="NCBIfam" id="TIGR00981">
    <property type="entry name" value="rpsL_bact"/>
    <property type="match status" value="1"/>
</dbReference>
<dbReference type="PANTHER" id="PTHR11652">
    <property type="entry name" value="30S RIBOSOMAL PROTEIN S12 FAMILY MEMBER"/>
    <property type="match status" value="1"/>
</dbReference>
<dbReference type="Pfam" id="PF00164">
    <property type="entry name" value="Ribosom_S12_S23"/>
    <property type="match status" value="1"/>
</dbReference>
<dbReference type="PIRSF" id="PIRSF002133">
    <property type="entry name" value="Ribosomal_S12/S23"/>
    <property type="match status" value="1"/>
</dbReference>
<dbReference type="PRINTS" id="PR01034">
    <property type="entry name" value="RIBOSOMALS12"/>
</dbReference>
<dbReference type="SUPFAM" id="SSF50249">
    <property type="entry name" value="Nucleic acid-binding proteins"/>
    <property type="match status" value="1"/>
</dbReference>
<dbReference type="PROSITE" id="PS00055">
    <property type="entry name" value="RIBOSOMAL_S12"/>
    <property type="match status" value="1"/>
</dbReference>
<organism>
    <name type="scientific">Syntrophobacter fumaroxidans (strain DSM 10017 / MPOB)</name>
    <dbReference type="NCBI Taxonomy" id="335543"/>
    <lineage>
        <taxon>Bacteria</taxon>
        <taxon>Pseudomonadati</taxon>
        <taxon>Thermodesulfobacteriota</taxon>
        <taxon>Syntrophobacteria</taxon>
        <taxon>Syntrophobacterales</taxon>
        <taxon>Syntrophobacteraceae</taxon>
        <taxon>Syntrophobacter</taxon>
    </lineage>
</organism>
<accession>A0LII6</accession>
<comment type="function">
    <text evidence="2">With S4 and S5 plays an important role in translational accuracy.</text>
</comment>
<comment type="function">
    <text evidence="2">Interacts with and stabilizes bases of the 16S rRNA that are involved in tRNA selection in the A site and with the mRNA backbone. Located at the interface of the 30S and 50S subunits, it traverses the body of the 30S subunit contacting proteins on the other side and probably holding the rRNA structure together. The combined cluster of proteins S8, S12 and S17 appears to hold together the shoulder and platform of the 30S subunit.</text>
</comment>
<comment type="subunit">
    <text evidence="2">Part of the 30S ribosomal subunit. Contacts proteins S8 and S17. May interact with IF1 in the 30S initiation complex.</text>
</comment>
<comment type="similarity">
    <text evidence="2">Belongs to the universal ribosomal protein uS12 family.</text>
</comment>
<gene>
    <name evidence="2" type="primary">rpsL</name>
    <name type="ordered locus">Sfum_1551</name>
</gene>
<sequence length="123" mass="13739">MPTINQLVRKGREEIRKKSSTPALQCCPQKRGVCVRVYTTTPKKPNSALRKIARVRLTNGIEVTSYIPGIGHNLQEHSVVLIRGGRVKDLPGVRYHIIRGTLDALGVADRKQGRSKYGTKRPK</sequence>
<keyword id="KW-0488">Methylation</keyword>
<keyword id="KW-1185">Reference proteome</keyword>
<keyword id="KW-0687">Ribonucleoprotein</keyword>
<keyword id="KW-0689">Ribosomal protein</keyword>
<keyword id="KW-0694">RNA-binding</keyword>
<keyword id="KW-0699">rRNA-binding</keyword>
<keyword id="KW-0820">tRNA-binding</keyword>
<protein>
    <recommendedName>
        <fullName evidence="2">Small ribosomal subunit protein uS12</fullName>
    </recommendedName>
    <alternativeName>
        <fullName evidence="3">30S ribosomal protein S12</fullName>
    </alternativeName>
</protein>
<feature type="chain" id="PRO_0000296040" description="Small ribosomal subunit protein uS12">
    <location>
        <begin position="1"/>
        <end position="123"/>
    </location>
</feature>
<feature type="modified residue" description="3-methylthioaspartic acid" evidence="1">
    <location>
        <position position="89"/>
    </location>
</feature>